<keyword id="KW-1185">Reference proteome</keyword>
<keyword id="KW-0687">Ribonucleoprotein</keyword>
<keyword id="KW-0689">Ribosomal protein</keyword>
<keyword id="KW-0694">RNA-binding</keyword>
<keyword id="KW-0699">rRNA-binding</keyword>
<organism>
    <name type="scientific">Prochlorococcus marinus (strain NATL2A)</name>
    <dbReference type="NCBI Taxonomy" id="59920"/>
    <lineage>
        <taxon>Bacteria</taxon>
        <taxon>Bacillati</taxon>
        <taxon>Cyanobacteriota</taxon>
        <taxon>Cyanophyceae</taxon>
        <taxon>Synechococcales</taxon>
        <taxon>Prochlorococcaceae</taxon>
        <taxon>Prochlorococcus</taxon>
    </lineage>
</organism>
<feature type="chain" id="PRO_0000229563" description="Small ribosomal subunit protein bS6">
    <location>
        <begin position="1"/>
        <end position="138"/>
    </location>
</feature>
<feature type="region of interest" description="Disordered" evidence="2">
    <location>
        <begin position="94"/>
        <end position="138"/>
    </location>
</feature>
<feature type="compositionally biased region" description="Basic and acidic residues" evidence="2">
    <location>
        <begin position="106"/>
        <end position="138"/>
    </location>
</feature>
<proteinExistence type="inferred from homology"/>
<dbReference type="EMBL" id="CP000095">
    <property type="protein sequence ID" value="AAZ58805.1"/>
    <property type="molecule type" value="Genomic_DNA"/>
</dbReference>
<dbReference type="RefSeq" id="WP_011295659.1">
    <property type="nucleotide sequence ID" value="NC_007335.2"/>
</dbReference>
<dbReference type="SMR" id="Q46I73"/>
<dbReference type="STRING" id="59920.PMN2A_1316"/>
<dbReference type="KEGG" id="pmn:PMN2A_1316"/>
<dbReference type="HOGENOM" id="CLU_113441_4_2_3"/>
<dbReference type="OrthoDB" id="9812702at2"/>
<dbReference type="PhylomeDB" id="Q46I73"/>
<dbReference type="Proteomes" id="UP000002535">
    <property type="component" value="Chromosome"/>
</dbReference>
<dbReference type="GO" id="GO:0005737">
    <property type="term" value="C:cytoplasm"/>
    <property type="evidence" value="ECO:0007669"/>
    <property type="project" value="UniProtKB-ARBA"/>
</dbReference>
<dbReference type="GO" id="GO:1990904">
    <property type="term" value="C:ribonucleoprotein complex"/>
    <property type="evidence" value="ECO:0007669"/>
    <property type="project" value="UniProtKB-KW"/>
</dbReference>
<dbReference type="GO" id="GO:0005840">
    <property type="term" value="C:ribosome"/>
    <property type="evidence" value="ECO:0007669"/>
    <property type="project" value="UniProtKB-KW"/>
</dbReference>
<dbReference type="GO" id="GO:0070181">
    <property type="term" value="F:small ribosomal subunit rRNA binding"/>
    <property type="evidence" value="ECO:0007669"/>
    <property type="project" value="TreeGrafter"/>
</dbReference>
<dbReference type="GO" id="GO:0003735">
    <property type="term" value="F:structural constituent of ribosome"/>
    <property type="evidence" value="ECO:0007669"/>
    <property type="project" value="InterPro"/>
</dbReference>
<dbReference type="GO" id="GO:0006412">
    <property type="term" value="P:translation"/>
    <property type="evidence" value="ECO:0007669"/>
    <property type="project" value="UniProtKB-UniRule"/>
</dbReference>
<dbReference type="CDD" id="cd15487">
    <property type="entry name" value="bS6_chloro_cyano"/>
    <property type="match status" value="1"/>
</dbReference>
<dbReference type="Gene3D" id="3.30.70.60">
    <property type="match status" value="1"/>
</dbReference>
<dbReference type="HAMAP" id="MF_00360">
    <property type="entry name" value="Ribosomal_bS6"/>
    <property type="match status" value="1"/>
</dbReference>
<dbReference type="InterPro" id="IPR000529">
    <property type="entry name" value="Ribosomal_bS6"/>
</dbReference>
<dbReference type="InterPro" id="IPR020815">
    <property type="entry name" value="Ribosomal_bS6_CS"/>
</dbReference>
<dbReference type="InterPro" id="IPR035980">
    <property type="entry name" value="Ribosomal_bS6_sf"/>
</dbReference>
<dbReference type="InterPro" id="IPR020814">
    <property type="entry name" value="Ribosomal_S6_plastid/chlpt"/>
</dbReference>
<dbReference type="InterPro" id="IPR014717">
    <property type="entry name" value="Transl_elong_EF1B/ribsomal_bS6"/>
</dbReference>
<dbReference type="NCBIfam" id="TIGR00166">
    <property type="entry name" value="S6"/>
    <property type="match status" value="1"/>
</dbReference>
<dbReference type="PANTHER" id="PTHR21011">
    <property type="entry name" value="MITOCHONDRIAL 28S RIBOSOMAL PROTEIN S6"/>
    <property type="match status" value="1"/>
</dbReference>
<dbReference type="PANTHER" id="PTHR21011:SF1">
    <property type="entry name" value="SMALL RIBOSOMAL SUBUNIT PROTEIN BS6M"/>
    <property type="match status" value="1"/>
</dbReference>
<dbReference type="Pfam" id="PF01250">
    <property type="entry name" value="Ribosomal_S6"/>
    <property type="match status" value="1"/>
</dbReference>
<dbReference type="SUPFAM" id="SSF54995">
    <property type="entry name" value="Ribosomal protein S6"/>
    <property type="match status" value="1"/>
</dbReference>
<dbReference type="PROSITE" id="PS01048">
    <property type="entry name" value="RIBOSOMAL_S6"/>
    <property type="match status" value="1"/>
</dbReference>
<comment type="function">
    <text evidence="1">Binds together with bS18 to 16S ribosomal RNA.</text>
</comment>
<comment type="similarity">
    <text evidence="1">Belongs to the bacterial ribosomal protein bS6 family.</text>
</comment>
<protein>
    <recommendedName>
        <fullName evidence="1">Small ribosomal subunit protein bS6</fullName>
    </recommendedName>
    <alternativeName>
        <fullName evidence="3">30S ribosomal protein S6</fullName>
    </alternativeName>
</protein>
<sequence>MSEQPYYETMYILRPDIPEEEVDSHLKKYSEILEKSETEVLDSQMRGKRRLAYPIAKHKEGIYVQLSHKGNGQQVATLERAMRLSEDVIRYITVKQDGPLPTPKPTSKENEPEKEEVKPTEEKTESPSKDEKKEDSKE</sequence>
<accession>Q46I73</accession>
<reference key="1">
    <citation type="journal article" date="2007" name="PLoS Genet.">
        <title>Patterns and implications of gene gain and loss in the evolution of Prochlorococcus.</title>
        <authorList>
            <person name="Kettler G.C."/>
            <person name="Martiny A.C."/>
            <person name="Huang K."/>
            <person name="Zucker J."/>
            <person name="Coleman M.L."/>
            <person name="Rodrigue S."/>
            <person name="Chen F."/>
            <person name="Lapidus A."/>
            <person name="Ferriera S."/>
            <person name="Johnson J."/>
            <person name="Steglich C."/>
            <person name="Church G.M."/>
            <person name="Richardson P."/>
            <person name="Chisholm S.W."/>
        </authorList>
    </citation>
    <scope>NUCLEOTIDE SEQUENCE [LARGE SCALE GENOMIC DNA]</scope>
    <source>
        <strain>NATL2A</strain>
    </source>
</reference>
<name>RS6_PROMT</name>
<evidence type="ECO:0000255" key="1">
    <source>
        <dbReference type="HAMAP-Rule" id="MF_00360"/>
    </source>
</evidence>
<evidence type="ECO:0000256" key="2">
    <source>
        <dbReference type="SAM" id="MobiDB-lite"/>
    </source>
</evidence>
<evidence type="ECO:0000305" key="3"/>
<gene>
    <name evidence="1" type="primary">rpsF</name>
    <name evidence="1" type="synonym">rps6</name>
    <name type="ordered locus">PMN2A_1316</name>
</gene>